<proteinExistence type="evidence at protein level"/>
<feature type="initiator methionine" description="Removed" evidence="5">
    <location>
        <position position="1"/>
    </location>
</feature>
<feature type="chain" id="PRO_0000167706" description="Pyridoxine/pyridoxamine 5'-phosphate oxidase">
    <location>
        <begin position="2"/>
        <end position="218"/>
    </location>
</feature>
<feature type="binding site" evidence="3">
    <location>
        <begin position="14"/>
        <end position="17"/>
    </location>
    <ligand>
        <name>substrate</name>
    </ligand>
</feature>
<feature type="binding site" evidence="1 2 4">
    <location>
        <begin position="67"/>
        <end position="72"/>
    </location>
    <ligand>
        <name>FMN</name>
        <dbReference type="ChEBI" id="CHEBI:58210"/>
    </ligand>
</feature>
<feature type="binding site" evidence="2">
    <location>
        <position position="72"/>
    </location>
    <ligand>
        <name>substrate</name>
    </ligand>
</feature>
<feature type="binding site" evidence="1 2 4">
    <location>
        <begin position="82"/>
        <end position="83"/>
    </location>
    <ligand>
        <name>FMN</name>
        <dbReference type="ChEBI" id="CHEBI:58210"/>
    </ligand>
</feature>
<feature type="binding site" evidence="1 2 4">
    <location>
        <position position="88"/>
    </location>
    <ligand>
        <name>FMN</name>
        <dbReference type="ChEBI" id="CHEBI:58210"/>
    </ligand>
</feature>
<feature type="binding site" evidence="1 2 4">
    <location>
        <position position="89"/>
    </location>
    <ligand>
        <name>FMN</name>
        <dbReference type="ChEBI" id="CHEBI:58210"/>
    </ligand>
</feature>
<feature type="binding site" evidence="3 4">
    <location>
        <position position="111"/>
    </location>
    <ligand>
        <name>FMN</name>
        <dbReference type="ChEBI" id="CHEBI:58210"/>
    </ligand>
</feature>
<feature type="binding site" evidence="2">
    <location>
        <position position="129"/>
    </location>
    <ligand>
        <name>substrate</name>
    </ligand>
</feature>
<feature type="binding site" evidence="2">
    <location>
        <position position="133"/>
    </location>
    <ligand>
        <name>substrate</name>
    </ligand>
</feature>
<feature type="binding site" evidence="2">
    <location>
        <position position="137"/>
    </location>
    <ligand>
        <name>substrate</name>
    </ligand>
</feature>
<feature type="binding site" evidence="1 2 4">
    <location>
        <begin position="146"/>
        <end position="147"/>
    </location>
    <ligand>
        <name>FMN</name>
        <dbReference type="ChEBI" id="CHEBI:58210"/>
    </ligand>
</feature>
<feature type="binding site" evidence="4">
    <location>
        <position position="191"/>
    </location>
    <ligand>
        <name>FMN</name>
        <dbReference type="ChEBI" id="CHEBI:58210"/>
    </ligand>
</feature>
<feature type="binding site" evidence="3">
    <location>
        <begin position="197"/>
        <end position="199"/>
    </location>
    <ligand>
        <name>substrate</name>
    </ligand>
</feature>
<feature type="binding site" evidence="3 4">
    <location>
        <position position="201"/>
    </location>
    <ligand>
        <name>FMN</name>
        <dbReference type="ChEBI" id="CHEBI:58210"/>
    </ligand>
</feature>
<feature type="mutagenesis site" description="Reduces affinity for substrate about 7-fold, but has no effect on catalytic activity." evidence="3">
    <original>R</original>
    <variation>E</variation>
    <location>
        <position position="14"/>
    </location>
</feature>
<feature type="mutagenesis site" description="Reduces affinity for substrate about 9-fold, but has no effect on catalytic activity." evidence="3">
    <original>R</original>
    <variation>M</variation>
    <location>
        <position position="14"/>
    </location>
</feature>
<feature type="mutagenesis site" description="Reduces affinity for substrate 3-fold, but has about 5-fold increase in catalytic activity." evidence="3">
    <original>Y</original>
    <variation>F</variation>
    <location>
        <position position="17"/>
    </location>
</feature>
<feature type="mutagenesis site" description="Reduces affinity for substrate 3-fold and catalytic activity 2-fold." evidence="3">
    <original>D</original>
    <variation>A</variation>
    <location>
        <position position="49"/>
    </location>
</feature>
<feature type="mutagenesis site" description="Reduces affinity for substrate 8000-fold and catalytic activity 16-fold." evidence="3">
    <original>R</original>
    <variation>E</variation>
    <location>
        <position position="197"/>
    </location>
</feature>
<feature type="mutagenesis site" description="Reduces affinity for substrate 300-fold and catalytic activity about 4-fold." evidence="3">
    <original>R</original>
    <variation>M</variation>
    <location>
        <position position="197"/>
    </location>
</feature>
<feature type="mutagenesis site" description="Reduces affinity for substrate 230-fold, but has no effect on catalytic activity." evidence="3">
    <original>H</original>
    <variation>A</variation>
    <location>
        <position position="199"/>
    </location>
</feature>
<feature type="mutagenesis site" description="Reduces catalytic activity about 4-fold, but has no effect on affinity for substrate." evidence="3">
    <original>H</original>
    <variation>N</variation>
    <location>
        <position position="199"/>
    </location>
</feature>
<feature type="helix" evidence="10">
    <location>
        <begin position="9"/>
        <end position="12"/>
    </location>
</feature>
<feature type="helix" evidence="8">
    <location>
        <begin position="24"/>
        <end position="26"/>
    </location>
</feature>
<feature type="helix" evidence="8">
    <location>
        <begin position="31"/>
        <end position="44"/>
    </location>
</feature>
<feature type="strand" evidence="8">
    <location>
        <begin position="52"/>
        <end position="58"/>
    </location>
</feature>
<feature type="strand" evidence="8">
    <location>
        <begin position="64"/>
        <end position="70"/>
    </location>
</feature>
<feature type="strand" evidence="8">
    <location>
        <begin position="73"/>
        <end position="75"/>
    </location>
</feature>
<feature type="strand" evidence="8">
    <location>
        <begin position="78"/>
        <end position="84"/>
    </location>
</feature>
<feature type="helix" evidence="8">
    <location>
        <begin position="88"/>
        <end position="95"/>
    </location>
</feature>
<feature type="strand" evidence="8">
    <location>
        <begin position="98"/>
        <end position="103"/>
    </location>
</feature>
<feature type="helix" evidence="8">
    <location>
        <begin position="106"/>
        <end position="108"/>
    </location>
</feature>
<feature type="strand" evidence="8">
    <location>
        <begin position="110"/>
        <end position="120"/>
    </location>
</feature>
<feature type="helix" evidence="8">
    <location>
        <begin position="123"/>
        <end position="130"/>
    </location>
</feature>
<feature type="helix" evidence="8">
    <location>
        <begin position="135"/>
        <end position="143"/>
    </location>
</feature>
<feature type="helix" evidence="8">
    <location>
        <begin position="154"/>
        <end position="166"/>
    </location>
</feature>
<feature type="strand" evidence="9">
    <location>
        <begin position="167"/>
        <end position="170"/>
    </location>
</feature>
<feature type="strand" evidence="8">
    <location>
        <begin position="178"/>
        <end position="183"/>
    </location>
</feature>
<feature type="strand" evidence="8">
    <location>
        <begin position="186"/>
        <end position="192"/>
    </location>
</feature>
<feature type="helix" evidence="8">
    <location>
        <begin position="195"/>
        <end position="197"/>
    </location>
</feature>
<feature type="strand" evidence="8">
    <location>
        <begin position="200"/>
        <end position="206"/>
    </location>
</feature>
<feature type="strand" evidence="8">
    <location>
        <begin position="208"/>
        <end position="215"/>
    </location>
</feature>
<accession>P0AFI7</accession>
<accession>P28225</accession>
<comment type="function">
    <text evidence="3 5 6">Catalyzes the oxidation of either pyridoxine 5'-phosphate (PNP) or pyridoxamine 5'-phosphate (PMP) into pyridoxal 5'-phosphate (PLP).</text>
</comment>
<comment type="catalytic activity">
    <reaction evidence="3 5 6">
        <text>pyridoxamine 5'-phosphate + O2 + H2O = pyridoxal 5'-phosphate + H2O2 + NH4(+)</text>
        <dbReference type="Rhea" id="RHEA:15817"/>
        <dbReference type="ChEBI" id="CHEBI:15377"/>
        <dbReference type="ChEBI" id="CHEBI:15379"/>
        <dbReference type="ChEBI" id="CHEBI:16240"/>
        <dbReference type="ChEBI" id="CHEBI:28938"/>
        <dbReference type="ChEBI" id="CHEBI:58451"/>
        <dbReference type="ChEBI" id="CHEBI:597326"/>
        <dbReference type="EC" id="1.4.3.5"/>
    </reaction>
</comment>
<comment type="catalytic activity">
    <reaction evidence="3 5 6">
        <text>pyridoxine 5'-phosphate + O2 = pyridoxal 5'-phosphate + H2O2</text>
        <dbReference type="Rhea" id="RHEA:15149"/>
        <dbReference type="ChEBI" id="CHEBI:15379"/>
        <dbReference type="ChEBI" id="CHEBI:16240"/>
        <dbReference type="ChEBI" id="CHEBI:58589"/>
        <dbReference type="ChEBI" id="CHEBI:597326"/>
        <dbReference type="EC" id="1.4.3.5"/>
    </reaction>
</comment>
<comment type="cofactor">
    <cofactor evidence="1 2 3 4 5 6">
        <name>FMN</name>
        <dbReference type="ChEBI" id="CHEBI:58210"/>
    </cofactor>
    <text evidence="1 2 3 4 5 6">Binds 1 FMN per subunit.</text>
</comment>
<comment type="biophysicochemical properties">
    <kinetics>
        <KM evidence="3">0.3 uM for pyridoxamine 5'-phosphate</KM>
        <KM evidence="5 6">2 uM for pyridoxine 5'-phosphate (at pH 7.6 and 37 degrees Celsius)</KM>
        <KM evidence="5">105 uM for pyridoxamine 5'-phosphate (at pH 7.6 and 37 degrees Celsius)</KM>
        <text evidence="6">kcat is 0.3 sec(-1) for oxidase activity with pyridoxine 5'-phosphate as substrate (at pH 7.6 and 37 degrees Celsius).</text>
    </kinetics>
</comment>
<comment type="pathway">
    <text>Cofactor metabolism; pyridoxal 5'-phosphate salvage; pyridoxal 5'-phosphate from pyridoxamine 5'-phosphate: step 1/1.</text>
</comment>
<comment type="pathway">
    <text>Cofactor metabolism; pyridoxal 5'-phosphate salvage; pyridoxal 5'-phosphate from pyridoxine 5'-phosphate: step 1/1.</text>
</comment>
<comment type="subunit">
    <text evidence="1 2 3 4 5 6">Homodimer.</text>
</comment>
<comment type="miscellaneous">
    <text>Can bind a second molecule of pyridoxamine 5'-phosphate at a non-catalytic site in a cleft at the protein surface.</text>
</comment>
<comment type="similarity">
    <text evidence="7">Belongs to the pyridoxamine 5'-phosphate oxidase family.</text>
</comment>
<name>PDXH_ECOLI</name>
<dbReference type="EC" id="1.4.3.5" evidence="3 5 6"/>
<dbReference type="EMBL" id="M92351">
    <property type="protein sequence ID" value="AAA24709.1"/>
    <property type="molecule type" value="Genomic_DNA"/>
</dbReference>
<dbReference type="EMBL" id="U00096">
    <property type="protein sequence ID" value="AAC74710.1"/>
    <property type="molecule type" value="Genomic_DNA"/>
</dbReference>
<dbReference type="EMBL" id="AP009048">
    <property type="protein sequence ID" value="BAA15399.2"/>
    <property type="molecule type" value="Genomic_DNA"/>
</dbReference>
<dbReference type="PIR" id="B43261">
    <property type="entry name" value="B43261"/>
</dbReference>
<dbReference type="RefSeq" id="NP_416155.1">
    <property type="nucleotide sequence ID" value="NC_000913.3"/>
</dbReference>
<dbReference type="RefSeq" id="WP_001282319.1">
    <property type="nucleotide sequence ID" value="NZ_STEB01000003.1"/>
</dbReference>
<dbReference type="PDB" id="1DNL">
    <property type="method" value="X-ray"/>
    <property type="resolution" value="1.80 A"/>
    <property type="chains" value="A=20-218"/>
</dbReference>
<dbReference type="PDB" id="1G76">
    <property type="method" value="X-ray"/>
    <property type="resolution" value="2.20 A"/>
    <property type="chains" value="A=1-218"/>
</dbReference>
<dbReference type="PDB" id="1G77">
    <property type="method" value="X-ray"/>
    <property type="resolution" value="2.10 A"/>
    <property type="chains" value="A=1-218"/>
</dbReference>
<dbReference type="PDB" id="1G78">
    <property type="method" value="X-ray"/>
    <property type="resolution" value="2.20 A"/>
    <property type="chains" value="A=1-218"/>
</dbReference>
<dbReference type="PDB" id="1G79">
    <property type="method" value="X-ray"/>
    <property type="resolution" value="2.00 A"/>
    <property type="chains" value="A=1-218"/>
</dbReference>
<dbReference type="PDB" id="1JNW">
    <property type="method" value="X-ray"/>
    <property type="resolution" value="2.07 A"/>
    <property type="chains" value="A=1-218"/>
</dbReference>
<dbReference type="PDB" id="1WV4">
    <property type="method" value="X-ray"/>
    <property type="resolution" value="2.60 A"/>
    <property type="chains" value="A/B=1-218"/>
</dbReference>
<dbReference type="PDB" id="6YLZ">
    <property type="method" value="X-ray"/>
    <property type="resolution" value="1.56 A"/>
    <property type="chains" value="AAA=1-218"/>
</dbReference>
<dbReference type="PDB" id="6YMH">
    <property type="method" value="X-ray"/>
    <property type="resolution" value="2.42 A"/>
    <property type="chains" value="AAA/BBB=1-218"/>
</dbReference>
<dbReference type="PDBsum" id="1DNL"/>
<dbReference type="PDBsum" id="1G76"/>
<dbReference type="PDBsum" id="1G77"/>
<dbReference type="PDBsum" id="1G78"/>
<dbReference type="PDBsum" id="1G79"/>
<dbReference type="PDBsum" id="1JNW"/>
<dbReference type="PDBsum" id="1WV4"/>
<dbReference type="PDBsum" id="6YLZ"/>
<dbReference type="PDBsum" id="6YMH"/>
<dbReference type="SMR" id="P0AFI7"/>
<dbReference type="BioGRID" id="4263488">
    <property type="interactions" value="27"/>
</dbReference>
<dbReference type="BioGRID" id="851147">
    <property type="interactions" value="1"/>
</dbReference>
<dbReference type="DIP" id="DIP-48024N"/>
<dbReference type="FunCoup" id="P0AFI7">
    <property type="interactions" value="757"/>
</dbReference>
<dbReference type="IntAct" id="P0AFI7">
    <property type="interactions" value="13"/>
</dbReference>
<dbReference type="STRING" id="511145.b1638"/>
<dbReference type="DrugBank" id="DB03247">
    <property type="generic name" value="Flavin mononucleotide"/>
</dbReference>
<dbReference type="DrugBank" id="DB03345">
    <property type="generic name" value="Mercaptoethanol"/>
</dbReference>
<dbReference type="jPOST" id="P0AFI7"/>
<dbReference type="PaxDb" id="511145-b1638"/>
<dbReference type="EnsemblBacteria" id="AAC74710">
    <property type="protein sequence ID" value="AAC74710"/>
    <property type="gene ID" value="b1638"/>
</dbReference>
<dbReference type="GeneID" id="75171699"/>
<dbReference type="GeneID" id="946806"/>
<dbReference type="KEGG" id="ecj:JW1630"/>
<dbReference type="KEGG" id="eco:b1638"/>
<dbReference type="KEGG" id="ecoc:C3026_09410"/>
<dbReference type="PATRIC" id="fig|1411691.4.peg.622"/>
<dbReference type="EchoBASE" id="EB1450"/>
<dbReference type="eggNOG" id="COG0259">
    <property type="taxonomic scope" value="Bacteria"/>
</dbReference>
<dbReference type="InParanoid" id="P0AFI7"/>
<dbReference type="OMA" id="AYFRTRP"/>
<dbReference type="OrthoDB" id="9780392at2"/>
<dbReference type="PhylomeDB" id="P0AFI7"/>
<dbReference type="BioCyc" id="EcoCyc:PDXH-MONOMER"/>
<dbReference type="BioCyc" id="MetaCyc:PDXH-MONOMER"/>
<dbReference type="BRENDA" id="1.4.3.5">
    <property type="organism ID" value="2026"/>
</dbReference>
<dbReference type="SABIO-RK" id="P0AFI7"/>
<dbReference type="UniPathway" id="UPA01068">
    <property type="reaction ID" value="UER00304"/>
</dbReference>
<dbReference type="UniPathway" id="UPA01068">
    <property type="reaction ID" value="UER00305"/>
</dbReference>
<dbReference type="EvolutionaryTrace" id="P0AFI7"/>
<dbReference type="PRO" id="PR:P0AFI7"/>
<dbReference type="Proteomes" id="UP000000625">
    <property type="component" value="Chromosome"/>
</dbReference>
<dbReference type="GO" id="GO:0005829">
    <property type="term" value="C:cytosol"/>
    <property type="evidence" value="ECO:0000314"/>
    <property type="project" value="EcoCyc"/>
</dbReference>
<dbReference type="GO" id="GO:0032991">
    <property type="term" value="C:protein-containing complex"/>
    <property type="evidence" value="ECO:0000314"/>
    <property type="project" value="CAFA"/>
</dbReference>
<dbReference type="GO" id="GO:0010181">
    <property type="term" value="F:FMN binding"/>
    <property type="evidence" value="ECO:0000314"/>
    <property type="project" value="EcoCyc"/>
</dbReference>
<dbReference type="GO" id="GO:0016491">
    <property type="term" value="F:oxidoreductase activity"/>
    <property type="evidence" value="ECO:0000314"/>
    <property type="project" value="EcoliWiki"/>
</dbReference>
<dbReference type="GO" id="GO:0042301">
    <property type="term" value="F:phosphate ion binding"/>
    <property type="evidence" value="ECO:0000314"/>
    <property type="project" value="CAFA"/>
</dbReference>
<dbReference type="GO" id="GO:0042803">
    <property type="term" value="F:protein homodimerization activity"/>
    <property type="evidence" value="ECO:0000314"/>
    <property type="project" value="CAFA"/>
</dbReference>
<dbReference type="GO" id="GO:0030170">
    <property type="term" value="F:pyridoxal phosphate binding"/>
    <property type="evidence" value="ECO:0000314"/>
    <property type="project" value="EcoCyc"/>
</dbReference>
<dbReference type="GO" id="GO:0004733">
    <property type="term" value="F:pyridoxamine phosphate oxidase activity"/>
    <property type="evidence" value="ECO:0000314"/>
    <property type="project" value="EcoCyc"/>
</dbReference>
<dbReference type="GO" id="GO:1902444">
    <property type="term" value="F:riboflavin binding"/>
    <property type="evidence" value="ECO:0000314"/>
    <property type="project" value="CAFA"/>
</dbReference>
<dbReference type="GO" id="GO:0036001">
    <property type="term" value="P:'de novo' pyridoxal 5'-phosphate biosynthetic process"/>
    <property type="evidence" value="ECO:0000315"/>
    <property type="project" value="EcoCyc"/>
</dbReference>
<dbReference type="GO" id="GO:0042823">
    <property type="term" value="P:pyridoxal phosphate biosynthetic process"/>
    <property type="evidence" value="ECO:0000318"/>
    <property type="project" value="GO_Central"/>
</dbReference>
<dbReference type="GO" id="GO:0008615">
    <property type="term" value="P:pyridoxine biosynthetic process"/>
    <property type="evidence" value="ECO:0007669"/>
    <property type="project" value="UniProtKB-KW"/>
</dbReference>
<dbReference type="FunFam" id="2.30.110.10:FF:000001">
    <property type="entry name" value="Pyridoxine/pyridoxamine 5'-phosphate oxidase"/>
    <property type="match status" value="1"/>
</dbReference>
<dbReference type="Gene3D" id="2.30.110.10">
    <property type="entry name" value="Electron Transport, Fmn-binding Protein, Chain A"/>
    <property type="match status" value="1"/>
</dbReference>
<dbReference type="HAMAP" id="MF_01629">
    <property type="entry name" value="PdxH"/>
    <property type="match status" value="1"/>
</dbReference>
<dbReference type="InterPro" id="IPR000659">
    <property type="entry name" value="Pyridox_Oxase"/>
</dbReference>
<dbReference type="InterPro" id="IPR019740">
    <property type="entry name" value="Pyridox_Oxase_CS"/>
</dbReference>
<dbReference type="InterPro" id="IPR011576">
    <property type="entry name" value="Pyridox_Oxase_N"/>
</dbReference>
<dbReference type="InterPro" id="IPR019576">
    <property type="entry name" value="Pyridoxamine_oxidase_dimer_C"/>
</dbReference>
<dbReference type="InterPro" id="IPR012349">
    <property type="entry name" value="Split_barrel_FMN-bd"/>
</dbReference>
<dbReference type="NCBIfam" id="TIGR00558">
    <property type="entry name" value="pdxH"/>
    <property type="match status" value="1"/>
</dbReference>
<dbReference type="NCBIfam" id="NF004231">
    <property type="entry name" value="PRK05679.1"/>
    <property type="match status" value="1"/>
</dbReference>
<dbReference type="PANTHER" id="PTHR10851:SF0">
    <property type="entry name" value="PYRIDOXINE-5'-PHOSPHATE OXIDASE"/>
    <property type="match status" value="1"/>
</dbReference>
<dbReference type="PANTHER" id="PTHR10851">
    <property type="entry name" value="PYRIDOXINE-5-PHOSPHATE OXIDASE"/>
    <property type="match status" value="1"/>
</dbReference>
<dbReference type="Pfam" id="PF10590">
    <property type="entry name" value="PNP_phzG_C"/>
    <property type="match status" value="1"/>
</dbReference>
<dbReference type="Pfam" id="PF01243">
    <property type="entry name" value="PNPOx_N"/>
    <property type="match status" value="1"/>
</dbReference>
<dbReference type="PIRSF" id="PIRSF000190">
    <property type="entry name" value="Pyd_amn-ph_oxd"/>
    <property type="match status" value="1"/>
</dbReference>
<dbReference type="SUPFAM" id="SSF50475">
    <property type="entry name" value="FMN-binding split barrel"/>
    <property type="match status" value="1"/>
</dbReference>
<dbReference type="PROSITE" id="PS01064">
    <property type="entry name" value="PYRIDOX_OXIDASE"/>
    <property type="match status" value="1"/>
</dbReference>
<organism>
    <name type="scientific">Escherichia coli (strain K12)</name>
    <dbReference type="NCBI Taxonomy" id="83333"/>
    <lineage>
        <taxon>Bacteria</taxon>
        <taxon>Pseudomonadati</taxon>
        <taxon>Pseudomonadota</taxon>
        <taxon>Gammaproteobacteria</taxon>
        <taxon>Enterobacterales</taxon>
        <taxon>Enterobacteriaceae</taxon>
        <taxon>Escherichia</taxon>
    </lineage>
</organism>
<gene>
    <name type="primary">pdxH</name>
    <name type="ordered locus">b1638</name>
    <name type="ordered locus">JW1630</name>
</gene>
<keyword id="KW-0002">3D-structure</keyword>
<keyword id="KW-0903">Direct protein sequencing</keyword>
<keyword id="KW-0285">Flavoprotein</keyword>
<keyword id="KW-0288">FMN</keyword>
<keyword id="KW-0560">Oxidoreductase</keyword>
<keyword id="KW-0664">Pyridoxine biosynthesis</keyword>
<keyword id="KW-1185">Reference proteome</keyword>
<evidence type="ECO:0000269" key="1">
    <source>
    </source>
</evidence>
<evidence type="ECO:0000269" key="2">
    <source>
    </source>
</evidence>
<evidence type="ECO:0000269" key="3">
    <source>
    </source>
</evidence>
<evidence type="ECO:0000269" key="4">
    <source>
    </source>
</evidence>
<evidence type="ECO:0000269" key="5">
    <source>
    </source>
</evidence>
<evidence type="ECO:0000269" key="6">
    <source>
    </source>
</evidence>
<evidence type="ECO:0000305" key="7"/>
<evidence type="ECO:0007829" key="8">
    <source>
        <dbReference type="PDB" id="1DNL"/>
    </source>
</evidence>
<evidence type="ECO:0007829" key="9">
    <source>
        <dbReference type="PDB" id="1G79"/>
    </source>
</evidence>
<evidence type="ECO:0007829" key="10">
    <source>
        <dbReference type="PDB" id="1JNW"/>
    </source>
</evidence>
<reference key="1">
    <citation type="journal article" date="1992" name="J. Bacteriol.">
        <title>Characterization of the complex pdxH-tyrS operon of Escherichia coli K-12 and pleiotropic phenotypes caused by pdxH insertion mutations.</title>
        <authorList>
            <person name="Lam H.-M."/>
            <person name="Winkler M.E."/>
        </authorList>
    </citation>
    <scope>NUCLEOTIDE SEQUENCE [GENOMIC DNA]</scope>
    <source>
        <strain>K12</strain>
    </source>
</reference>
<reference key="2">
    <citation type="journal article" date="1996" name="DNA Res.">
        <title>A 570-kb DNA sequence of the Escherichia coli K-12 genome corresponding to the 28.0-40.1 min region on the linkage map.</title>
        <authorList>
            <person name="Aiba H."/>
            <person name="Baba T."/>
            <person name="Fujita K."/>
            <person name="Hayashi K."/>
            <person name="Inada T."/>
            <person name="Isono K."/>
            <person name="Itoh T."/>
            <person name="Kasai H."/>
            <person name="Kashimoto K."/>
            <person name="Kimura S."/>
            <person name="Kitakawa M."/>
            <person name="Kitagawa M."/>
            <person name="Makino K."/>
            <person name="Miki T."/>
            <person name="Mizobuchi K."/>
            <person name="Mori H."/>
            <person name="Mori T."/>
            <person name="Motomura K."/>
            <person name="Nakade S."/>
            <person name="Nakamura Y."/>
            <person name="Nashimoto H."/>
            <person name="Nishio Y."/>
            <person name="Oshima T."/>
            <person name="Saito N."/>
            <person name="Sampei G."/>
            <person name="Seki Y."/>
            <person name="Sivasundaram S."/>
            <person name="Tagami H."/>
            <person name="Takeda J."/>
            <person name="Takemoto K."/>
            <person name="Takeuchi Y."/>
            <person name="Wada C."/>
            <person name="Yamamoto Y."/>
            <person name="Horiuchi T."/>
        </authorList>
    </citation>
    <scope>NUCLEOTIDE SEQUENCE [LARGE SCALE GENOMIC DNA]</scope>
    <source>
        <strain>K12 / W3110 / ATCC 27325 / DSM 5911</strain>
    </source>
</reference>
<reference key="3">
    <citation type="journal article" date="1997" name="Science">
        <title>The complete genome sequence of Escherichia coli K-12.</title>
        <authorList>
            <person name="Blattner F.R."/>
            <person name="Plunkett G. III"/>
            <person name="Bloch C.A."/>
            <person name="Perna N.T."/>
            <person name="Burland V."/>
            <person name="Riley M."/>
            <person name="Collado-Vides J."/>
            <person name="Glasner J.D."/>
            <person name="Rode C.K."/>
            <person name="Mayhew G.F."/>
            <person name="Gregor J."/>
            <person name="Davis N.W."/>
            <person name="Kirkpatrick H.A."/>
            <person name="Goeden M.A."/>
            <person name="Rose D.J."/>
            <person name="Mau B."/>
            <person name="Shao Y."/>
        </authorList>
    </citation>
    <scope>NUCLEOTIDE SEQUENCE [LARGE SCALE GENOMIC DNA]</scope>
    <source>
        <strain>K12 / MG1655 / ATCC 47076</strain>
    </source>
</reference>
<reference key="4">
    <citation type="journal article" date="2006" name="Mol. Syst. Biol.">
        <title>Highly accurate genome sequences of Escherichia coli K-12 strains MG1655 and W3110.</title>
        <authorList>
            <person name="Hayashi K."/>
            <person name="Morooka N."/>
            <person name="Yamamoto Y."/>
            <person name="Fujita K."/>
            <person name="Isono K."/>
            <person name="Choi S."/>
            <person name="Ohtsubo E."/>
            <person name="Baba T."/>
            <person name="Wanner B.L."/>
            <person name="Mori H."/>
            <person name="Horiuchi T."/>
        </authorList>
    </citation>
    <scope>NUCLEOTIDE SEQUENCE [LARGE SCALE GENOMIC DNA]</scope>
    <source>
        <strain>K12 / W3110 / ATCC 27325 / DSM 5911</strain>
    </source>
</reference>
<reference key="5">
    <citation type="journal article" date="1995" name="J. Bacteriol.">
        <title>Kinetic limitation and cellular amount of pyridoxine (pyridoxamine) 5'-phosphate oxidase of Escherichia coli K-12.</title>
        <authorList>
            <person name="Zhao G."/>
            <person name="Winkler M.E."/>
        </authorList>
    </citation>
    <scope>PROTEIN SEQUENCE OF 2-11</scope>
    <scope>FUNCTION</scope>
    <scope>CATALYTIC ACTIVITY</scope>
    <scope>BIOPHYSICOCHEMICAL PROPERTIES</scope>
    <scope>COFACTOR</scope>
    <scope>SUBUNIT</scope>
    <source>
        <strain>K12</strain>
    </source>
</reference>
<reference key="6">
    <citation type="journal article" date="1998" name="Protein Expr. Purif.">
        <title>Expression, purification, and characterization of recombinant Escherichia coli pyridoxine 5'-phosphate oxidase.</title>
        <authorList>
            <person name="di Salvo M."/>
            <person name="Yang E."/>
            <person name="Zhao G."/>
            <person name="Winkler M.E."/>
            <person name="Schirch V."/>
        </authorList>
    </citation>
    <scope>FUNCTION</scope>
    <scope>CATALYTIC ACTIVITY</scope>
    <scope>BIOPHYSICOCHEMICAL PROPERTIES</scope>
    <scope>COFACTOR</scope>
    <scope>SUBUNIT</scope>
</reference>
<reference key="7">
    <citation type="journal article" date="2000" name="Structure">
        <title>X-ray structure of Escherichia coli pyridoxine 5'-phosphate oxidase complexed with FMN at 1.8-A resolution.</title>
        <authorList>
            <person name="Safo M.K."/>
            <person name="Mathews I."/>
            <person name="Musayev F.N."/>
            <person name="di Salvo M.L."/>
            <person name="Thiel D.J."/>
            <person name="Abraham D.J."/>
            <person name="Schirch V."/>
        </authorList>
    </citation>
    <scope>X-RAY CRYSTALLOGRAPHY (1.8 ANGSTROMS) OF 20-218 IN COMPLEX WITH FMN</scope>
    <scope>COFACTOR</scope>
    <scope>SUBUNIT</scope>
</reference>
<reference key="8">
    <citation type="journal article" date="2001" name="J. Mol. Biol.">
        <title>X-ray structure of Escherichia coli pyridoxine 5'-phosphate oxidase complexed with pyridoxal 5'-phosphate at 2.0 A resolution.</title>
        <authorList>
            <person name="Safo M.K."/>
            <person name="Musayev F.N."/>
            <person name="di Salvo M.L."/>
            <person name="Schirch V."/>
        </authorList>
    </citation>
    <scope>X-RAY CRYSTALLOGRAPHY (2.0 ANGSTROMS) IN COMPLEXES WITH PYRIDOXAL 5'-PHOSPHATE AND FMN</scope>
    <scope>COFACTOR</scope>
    <scope>SUBUNIT</scope>
</reference>
<reference key="9">
    <citation type="journal article" date="2002" name="J. Mol. Biol.">
        <title>Active site structure and stereospecificity of Escherichia coli pyridoxine-5'-phosphate oxidase.</title>
        <authorList>
            <person name="di Salvo M.L."/>
            <person name="Ko T.-P."/>
            <person name="Musayev F.N."/>
            <person name="Raboni S."/>
            <person name="Schirch V."/>
            <person name="Safo M.K."/>
        </authorList>
    </citation>
    <scope>X-RAY CRYSTALLOGRAPHY (2.07 ANGSTROMS) IN COMPLEX WITH PYRIDOXAL 5'-PHOSPHATE AND FMN</scope>
    <scope>FUNCTION</scope>
    <scope>CATALYTIC ACTIVITY</scope>
    <scope>SUBUNIT</scope>
    <scope>BIOPHYSICOCHEMICAL PROPERTIES</scope>
    <scope>MUTAGENESIS OF ARG-14; TYR-17; ASP-49; ARG-197 AND HIS-199</scope>
    <scope>COFACTOR</scope>
</reference>
<reference key="10">
    <citation type="journal article" date="2005" name="Acta Crystallogr. D">
        <title>Structure of Escherichia coli pyridoxine 5'-phosphate oxidase in a tetragonal crystal form: insights into the mechanistic pathway of the enzyme.</title>
        <authorList>
            <person name="Safo M.K."/>
            <person name="Musayev F.N."/>
            <person name="Schirch V."/>
        </authorList>
    </citation>
    <scope>X-RAY CRYSTALLOGRAPHY (2.6 ANGSTROMS) IN COMPLEX WITH PYRIDOXAL 5'-PHOSPHATE AND FMN</scope>
    <scope>COFACTOR</scope>
    <scope>SUBUNIT</scope>
</reference>
<sequence>MSDNDELQQIAHLRREYTKGGLRRRDLPADPLTLFERWLSQACEAKLADPTAMVVATVDEHGQPYQRIVLLKHYDEKGMVFYTNLGSRKAHQIENNPRVSLLFPWHTLERQVMVIGKAERLSTLEVMKYFHSRPRDSQIGAWVSKQSSRISARGILESKFLELKQKFQQGEVPLPSFWGGFRVSLEQIEFWQGGEHRLHDRFLYQRENDAWKIDRLAP</sequence>
<protein>
    <recommendedName>
        <fullName>Pyridoxine/pyridoxamine 5'-phosphate oxidase</fullName>
        <ecNumber evidence="3 5 6">1.4.3.5</ecNumber>
    </recommendedName>
    <alternativeName>
        <fullName>PNP/PMP oxidase</fullName>
        <shortName>PNPOx</shortName>
    </alternativeName>
    <alternativeName>
        <fullName>Pyridoxal 5'-phosphate synthase</fullName>
    </alternativeName>
</protein>